<accession>Q9Y0H7</accession>
<reference key="1">
    <citation type="submission" date="1999-05" db="EMBL/GenBank/DDBJ databases">
        <title>The L37a ribosomal protein cDNA sequence of Atlantic hagfish (Myxine glutinosa).</title>
        <authorList>
            <person name="White G.P."/>
            <person name="Cunningham C."/>
        </authorList>
    </citation>
    <scope>NUCLEOTIDE SEQUENCE [MRNA]</scope>
</reference>
<keyword id="KW-0963">Cytoplasm</keyword>
<keyword id="KW-0479">Metal-binding</keyword>
<keyword id="KW-0687">Ribonucleoprotein</keyword>
<keyword id="KW-0689">Ribosomal protein</keyword>
<keyword id="KW-0862">Zinc</keyword>
<keyword id="KW-0863">Zinc-finger</keyword>
<proteinExistence type="evidence at transcript level"/>
<protein>
    <recommendedName>
        <fullName evidence="3">Large ribosomal subunit protein eL43</fullName>
    </recommendedName>
    <alternativeName>
        <fullName>60S ribosomal protein L37a</fullName>
    </alternativeName>
</protein>
<organism>
    <name type="scientific">Myxine glutinosa</name>
    <name type="common">Atlantic hagfish</name>
    <dbReference type="NCBI Taxonomy" id="7769"/>
    <lineage>
        <taxon>Eukaryota</taxon>
        <taxon>Metazoa</taxon>
        <taxon>Chordata</taxon>
        <taxon>Craniata</taxon>
        <taxon>Vertebrata</taxon>
        <taxon>Cyclostomata</taxon>
        <taxon>Myxini</taxon>
        <taxon>Myxiniformes</taxon>
        <taxon>Myxinidae</taxon>
        <taxon>Myxininae</taxon>
        <taxon>Myxine</taxon>
    </lineage>
</organism>
<name>RL37A_MYXGL</name>
<dbReference type="EMBL" id="AF152471">
    <property type="protein sequence ID" value="AAD37803.1"/>
    <property type="molecule type" value="mRNA"/>
</dbReference>
<dbReference type="SMR" id="Q9Y0H7"/>
<dbReference type="GO" id="GO:0022625">
    <property type="term" value="C:cytosolic large ribosomal subunit"/>
    <property type="evidence" value="ECO:0007669"/>
    <property type="project" value="UniProtKB-ARBA"/>
</dbReference>
<dbReference type="GO" id="GO:0070180">
    <property type="term" value="F:large ribosomal subunit rRNA binding"/>
    <property type="evidence" value="ECO:0007669"/>
    <property type="project" value="TreeGrafter"/>
</dbReference>
<dbReference type="GO" id="GO:0003735">
    <property type="term" value="F:structural constituent of ribosome"/>
    <property type="evidence" value="ECO:0007669"/>
    <property type="project" value="InterPro"/>
</dbReference>
<dbReference type="GO" id="GO:0008270">
    <property type="term" value="F:zinc ion binding"/>
    <property type="evidence" value="ECO:0007669"/>
    <property type="project" value="UniProtKB-KW"/>
</dbReference>
<dbReference type="GO" id="GO:0006412">
    <property type="term" value="P:translation"/>
    <property type="evidence" value="ECO:0007669"/>
    <property type="project" value="InterPro"/>
</dbReference>
<dbReference type="FunFam" id="2.20.25.30:FF:000002">
    <property type="entry name" value="60S ribosomal protein L37a"/>
    <property type="match status" value="1"/>
</dbReference>
<dbReference type="Gene3D" id="2.20.25.30">
    <property type="match status" value="1"/>
</dbReference>
<dbReference type="InterPro" id="IPR011331">
    <property type="entry name" value="Ribosomal_eL37/eL43"/>
</dbReference>
<dbReference type="InterPro" id="IPR002674">
    <property type="entry name" value="Ribosomal_eL43"/>
</dbReference>
<dbReference type="InterPro" id="IPR011332">
    <property type="entry name" value="Ribosomal_zn-bd"/>
</dbReference>
<dbReference type="NCBIfam" id="TIGR00280">
    <property type="entry name" value="eL43_euk_arch"/>
    <property type="match status" value="1"/>
</dbReference>
<dbReference type="PANTHER" id="PTHR48188:SF2">
    <property type="entry name" value="60S RIBOSOMAL PROTEIN L37A"/>
    <property type="match status" value="1"/>
</dbReference>
<dbReference type="PANTHER" id="PTHR48188">
    <property type="entry name" value="60S RIBOSOMAL PROTEIN L43"/>
    <property type="match status" value="1"/>
</dbReference>
<dbReference type="Pfam" id="PF01780">
    <property type="entry name" value="Ribosomal_L37ae"/>
    <property type="match status" value="1"/>
</dbReference>
<dbReference type="SUPFAM" id="SSF57829">
    <property type="entry name" value="Zn-binding ribosomal proteins"/>
    <property type="match status" value="1"/>
</dbReference>
<evidence type="ECO:0000250" key="1">
    <source>
        <dbReference type="UniProtKB" id="P49166"/>
    </source>
</evidence>
<evidence type="ECO:0000250" key="2">
    <source>
        <dbReference type="UniProtKB" id="P61513"/>
    </source>
</evidence>
<evidence type="ECO:0000305" key="3"/>
<feature type="chain" id="PRO_0000139822" description="Large ribosomal subunit protein eL43">
    <location>
        <begin position="1" status="less than"/>
        <end position="85"/>
    </location>
</feature>
<feature type="zinc finger region" description="C4-type">
    <location>
        <begin position="32"/>
        <end position="53"/>
    </location>
</feature>
<feature type="binding site" evidence="1">
    <location>
        <position position="32"/>
    </location>
    <ligand>
        <name>Zn(2+)</name>
        <dbReference type="ChEBI" id="CHEBI:29105"/>
    </ligand>
</feature>
<feature type="binding site" evidence="1">
    <location>
        <position position="35"/>
    </location>
    <ligand>
        <name>Zn(2+)</name>
        <dbReference type="ChEBI" id="CHEBI:29105"/>
    </ligand>
</feature>
<feature type="binding site" evidence="1">
    <location>
        <position position="50"/>
    </location>
    <ligand>
        <name>Zn(2+)</name>
        <dbReference type="ChEBI" id="CHEBI:29105"/>
    </ligand>
</feature>
<feature type="binding site" evidence="1">
    <location>
        <position position="53"/>
    </location>
    <ligand>
        <name>Zn(2+)</name>
        <dbReference type="ChEBI" id="CHEBI:29105"/>
    </ligand>
</feature>
<feature type="non-terminal residue">
    <location>
        <position position="1"/>
    </location>
</feature>
<sequence>VGIVGKYGTRYGASLRKMVKKIEITQHSKYTCTFCGKTKMKRRAVGIWHCGSCMKTVAGGAWTYNTSSAVTVKSAIRRLREMKDQ</sequence>
<comment type="function">
    <text evidence="2">Component of the large ribosomal subunit. The ribosome is a large ribonucleoprotein complex responsible for the synthesis of proteins in the cell.</text>
</comment>
<comment type="subunit">
    <text evidence="2">Component of the large ribosomal subunit.</text>
</comment>
<comment type="subcellular location">
    <subcellularLocation>
        <location evidence="2">Cytoplasm</location>
    </subcellularLocation>
</comment>
<comment type="similarity">
    <text evidence="3">Belongs to the eukaryotic ribosomal protein eL43 family.</text>
</comment>
<gene>
    <name type="primary">rpl37a</name>
</gene>